<organism>
    <name type="scientific">Escherichia coli (strain SMS-3-5 / SECEC)</name>
    <dbReference type="NCBI Taxonomy" id="439855"/>
    <lineage>
        <taxon>Bacteria</taxon>
        <taxon>Pseudomonadati</taxon>
        <taxon>Pseudomonadota</taxon>
        <taxon>Gammaproteobacteria</taxon>
        <taxon>Enterobacterales</taxon>
        <taxon>Enterobacteriaceae</taxon>
        <taxon>Escherichia</taxon>
    </lineage>
</organism>
<dbReference type="EMBL" id="CP000970">
    <property type="protein sequence ID" value="ACB17051.1"/>
    <property type="molecule type" value="Genomic_DNA"/>
</dbReference>
<dbReference type="RefSeq" id="WP_000801125.1">
    <property type="nucleotide sequence ID" value="NC_010498.1"/>
</dbReference>
<dbReference type="BMRB" id="B1LJG6"/>
<dbReference type="SMR" id="B1LJG6"/>
<dbReference type="GeneID" id="93777044"/>
<dbReference type="KEGG" id="ecm:EcSMS35_0452"/>
<dbReference type="HOGENOM" id="CLU_087843_4_1_6"/>
<dbReference type="Proteomes" id="UP000007011">
    <property type="component" value="Chromosome"/>
</dbReference>
<dbReference type="GO" id="GO:0005829">
    <property type="term" value="C:cytosol"/>
    <property type="evidence" value="ECO:0007669"/>
    <property type="project" value="TreeGrafter"/>
</dbReference>
<dbReference type="GO" id="GO:0003723">
    <property type="term" value="F:RNA binding"/>
    <property type="evidence" value="ECO:0007669"/>
    <property type="project" value="UniProtKB-UniRule"/>
</dbReference>
<dbReference type="GO" id="GO:0006353">
    <property type="term" value="P:DNA-templated transcription termination"/>
    <property type="evidence" value="ECO:0007669"/>
    <property type="project" value="UniProtKB-UniRule"/>
</dbReference>
<dbReference type="GO" id="GO:0031564">
    <property type="term" value="P:transcription antitermination"/>
    <property type="evidence" value="ECO:0007669"/>
    <property type="project" value="UniProtKB-KW"/>
</dbReference>
<dbReference type="CDD" id="cd00619">
    <property type="entry name" value="Terminator_NusB"/>
    <property type="match status" value="1"/>
</dbReference>
<dbReference type="FunFam" id="1.10.940.10:FF:000001">
    <property type="entry name" value="Transcription antitermination factor NusB"/>
    <property type="match status" value="1"/>
</dbReference>
<dbReference type="Gene3D" id="1.10.940.10">
    <property type="entry name" value="NusB-like"/>
    <property type="match status" value="1"/>
</dbReference>
<dbReference type="HAMAP" id="MF_00073">
    <property type="entry name" value="NusB"/>
    <property type="match status" value="1"/>
</dbReference>
<dbReference type="InterPro" id="IPR035926">
    <property type="entry name" value="NusB-like_sf"/>
</dbReference>
<dbReference type="InterPro" id="IPR011605">
    <property type="entry name" value="NusB_fam"/>
</dbReference>
<dbReference type="InterPro" id="IPR006027">
    <property type="entry name" value="NusB_RsmB_TIM44"/>
</dbReference>
<dbReference type="NCBIfam" id="TIGR01951">
    <property type="entry name" value="nusB"/>
    <property type="match status" value="1"/>
</dbReference>
<dbReference type="PANTHER" id="PTHR11078:SF3">
    <property type="entry name" value="ANTITERMINATION NUSB DOMAIN-CONTAINING PROTEIN"/>
    <property type="match status" value="1"/>
</dbReference>
<dbReference type="PANTHER" id="PTHR11078">
    <property type="entry name" value="N UTILIZATION SUBSTANCE PROTEIN B-RELATED"/>
    <property type="match status" value="1"/>
</dbReference>
<dbReference type="Pfam" id="PF01029">
    <property type="entry name" value="NusB"/>
    <property type="match status" value="1"/>
</dbReference>
<dbReference type="SUPFAM" id="SSF48013">
    <property type="entry name" value="NusB-like"/>
    <property type="match status" value="1"/>
</dbReference>
<accession>B1LJG6</accession>
<feature type="chain" id="PRO_1000117053" description="Transcription antitermination protein NusB">
    <location>
        <begin position="1"/>
        <end position="139"/>
    </location>
</feature>
<name>NUSB_ECOSM</name>
<reference key="1">
    <citation type="journal article" date="2008" name="J. Bacteriol.">
        <title>Insights into the environmental resistance gene pool from the genome sequence of the multidrug-resistant environmental isolate Escherichia coli SMS-3-5.</title>
        <authorList>
            <person name="Fricke W.F."/>
            <person name="Wright M.S."/>
            <person name="Lindell A.H."/>
            <person name="Harkins D.M."/>
            <person name="Baker-Austin C."/>
            <person name="Ravel J."/>
            <person name="Stepanauskas R."/>
        </authorList>
    </citation>
    <scope>NUCLEOTIDE SEQUENCE [LARGE SCALE GENOMIC DNA]</scope>
    <source>
        <strain>SMS-3-5 / SECEC</strain>
    </source>
</reference>
<proteinExistence type="inferred from homology"/>
<protein>
    <recommendedName>
        <fullName evidence="1">Transcription antitermination protein NusB</fullName>
    </recommendedName>
    <alternativeName>
        <fullName evidence="1">Antitermination factor NusB</fullName>
    </alternativeName>
</protein>
<keyword id="KW-0694">RNA-binding</keyword>
<keyword id="KW-0804">Transcription</keyword>
<keyword id="KW-0889">Transcription antitermination</keyword>
<keyword id="KW-0805">Transcription regulation</keyword>
<evidence type="ECO:0000255" key="1">
    <source>
        <dbReference type="HAMAP-Rule" id="MF_00073"/>
    </source>
</evidence>
<comment type="function">
    <text evidence="1">Involved in transcription antitermination. Required for transcription of ribosomal RNA (rRNA) genes. Binds specifically to the boxA antiterminator sequence of the ribosomal RNA (rrn) operons.</text>
</comment>
<comment type="similarity">
    <text evidence="1">Belongs to the NusB family.</text>
</comment>
<gene>
    <name evidence="1" type="primary">nusB</name>
    <name type="ordered locus">EcSMS35_0452</name>
</gene>
<sequence>MKPAARRRARECAVQALYSWQLSQNDIADVEYQFLAEQDVKDVDVLYFRELLAGVATNTAYLDGLMKPYLSRLLEELGQVEKAVLRIALYELSKRSDVPYKVAINEAIELAKSFGAEDSHKFVNGVLDKAAPVIRPNKK</sequence>